<gene>
    <name evidence="1" type="primary">ligB</name>
    <name type="ordered locus">Avin_03590</name>
</gene>
<dbReference type="EC" id="6.5.1.2" evidence="1"/>
<dbReference type="EMBL" id="CP001157">
    <property type="protein sequence ID" value="ACO76619.1"/>
    <property type="molecule type" value="Genomic_DNA"/>
</dbReference>
<dbReference type="RefSeq" id="WP_012699047.1">
    <property type="nucleotide sequence ID" value="NC_012560.1"/>
</dbReference>
<dbReference type="SMR" id="C1DIC2"/>
<dbReference type="STRING" id="322710.Avin_03590"/>
<dbReference type="EnsemblBacteria" id="ACO76619">
    <property type="protein sequence ID" value="ACO76619"/>
    <property type="gene ID" value="Avin_03590"/>
</dbReference>
<dbReference type="GeneID" id="88183806"/>
<dbReference type="KEGG" id="avn:Avin_03590"/>
<dbReference type="eggNOG" id="COG0272">
    <property type="taxonomic scope" value="Bacteria"/>
</dbReference>
<dbReference type="HOGENOM" id="CLU_489786_0_0_6"/>
<dbReference type="OrthoDB" id="9759736at2"/>
<dbReference type="Proteomes" id="UP000002424">
    <property type="component" value="Chromosome"/>
</dbReference>
<dbReference type="GO" id="GO:0003911">
    <property type="term" value="F:DNA ligase (NAD+) activity"/>
    <property type="evidence" value="ECO:0007669"/>
    <property type="project" value="UniProtKB-UniRule"/>
</dbReference>
<dbReference type="GO" id="GO:0006281">
    <property type="term" value="P:DNA repair"/>
    <property type="evidence" value="ECO:0007669"/>
    <property type="project" value="UniProtKB-KW"/>
</dbReference>
<dbReference type="GO" id="GO:0006260">
    <property type="term" value="P:DNA replication"/>
    <property type="evidence" value="ECO:0007669"/>
    <property type="project" value="UniProtKB-KW"/>
</dbReference>
<dbReference type="Gene3D" id="1.10.150.20">
    <property type="entry name" value="5' to 3' exonuclease, C-terminal subdomain"/>
    <property type="match status" value="2"/>
</dbReference>
<dbReference type="Gene3D" id="3.30.470.30">
    <property type="entry name" value="DNA ligase/mRNA capping enzyme"/>
    <property type="match status" value="1"/>
</dbReference>
<dbReference type="Gene3D" id="1.10.287.610">
    <property type="entry name" value="Helix hairpin bin"/>
    <property type="match status" value="1"/>
</dbReference>
<dbReference type="Gene3D" id="2.40.50.140">
    <property type="entry name" value="Nucleic acid-binding proteins"/>
    <property type="match status" value="1"/>
</dbReference>
<dbReference type="HAMAP" id="MF_01587">
    <property type="entry name" value="DNA_ligase_B"/>
    <property type="match status" value="1"/>
</dbReference>
<dbReference type="InterPro" id="IPR020923">
    <property type="entry name" value="DNA_ligase_B"/>
</dbReference>
<dbReference type="InterPro" id="IPR013839">
    <property type="entry name" value="DNAligase_adenylation"/>
</dbReference>
<dbReference type="InterPro" id="IPR013840">
    <property type="entry name" value="DNAligase_N"/>
</dbReference>
<dbReference type="InterPro" id="IPR012340">
    <property type="entry name" value="NA-bd_OB-fold"/>
</dbReference>
<dbReference type="InterPro" id="IPR050326">
    <property type="entry name" value="NAD_dep_DNA_ligaseB"/>
</dbReference>
<dbReference type="InterPro" id="IPR004150">
    <property type="entry name" value="NAD_DNA_ligase_OB"/>
</dbReference>
<dbReference type="InterPro" id="IPR010994">
    <property type="entry name" value="RuvA_2-like"/>
</dbReference>
<dbReference type="NCBIfam" id="NF005987">
    <property type="entry name" value="PRK08097.1"/>
    <property type="match status" value="1"/>
</dbReference>
<dbReference type="PANTHER" id="PTHR47810">
    <property type="entry name" value="DNA LIGASE"/>
    <property type="match status" value="1"/>
</dbReference>
<dbReference type="PANTHER" id="PTHR47810:SF1">
    <property type="entry name" value="DNA LIGASE B"/>
    <property type="match status" value="1"/>
</dbReference>
<dbReference type="Pfam" id="PF01653">
    <property type="entry name" value="DNA_ligase_aden"/>
    <property type="match status" value="1"/>
</dbReference>
<dbReference type="Pfam" id="PF03120">
    <property type="entry name" value="DNA_ligase_OB"/>
    <property type="match status" value="1"/>
</dbReference>
<dbReference type="Pfam" id="PF14520">
    <property type="entry name" value="HHH_5"/>
    <property type="match status" value="1"/>
</dbReference>
<dbReference type="SMART" id="SM00532">
    <property type="entry name" value="LIGANc"/>
    <property type="match status" value="1"/>
</dbReference>
<dbReference type="SUPFAM" id="SSF56091">
    <property type="entry name" value="DNA ligase/mRNA capping enzyme, catalytic domain"/>
    <property type="match status" value="1"/>
</dbReference>
<dbReference type="SUPFAM" id="SSF50249">
    <property type="entry name" value="Nucleic acid-binding proteins"/>
    <property type="match status" value="1"/>
</dbReference>
<dbReference type="SUPFAM" id="SSF47781">
    <property type="entry name" value="RuvA domain 2-like"/>
    <property type="match status" value="1"/>
</dbReference>
<comment type="function">
    <text evidence="1">Catalyzes the formation of phosphodiester linkages between 5'-phosphoryl and 3'-hydroxyl groups in double-stranded DNA using NAD as a coenzyme and as the energy source for the reaction.</text>
</comment>
<comment type="catalytic activity">
    <reaction evidence="1">
        <text>NAD(+) + (deoxyribonucleotide)n-3'-hydroxyl + 5'-phospho-(deoxyribonucleotide)m = (deoxyribonucleotide)n+m + AMP + beta-nicotinamide D-nucleotide.</text>
        <dbReference type="EC" id="6.5.1.2"/>
    </reaction>
</comment>
<comment type="similarity">
    <text evidence="1">Belongs to the NAD-dependent DNA ligase family. LigB subfamily.</text>
</comment>
<feature type="chain" id="PRO_0000381946" description="DNA ligase B">
    <location>
        <begin position="1"/>
        <end position="560"/>
    </location>
</feature>
<feature type="active site" description="N6-AMP-lysine intermediate" evidence="1">
    <location>
        <position position="128"/>
    </location>
</feature>
<proteinExistence type="inferred from homology"/>
<reference key="1">
    <citation type="journal article" date="2009" name="J. Bacteriol.">
        <title>Genome sequence of Azotobacter vinelandii, an obligate aerobe specialized to support diverse anaerobic metabolic processes.</title>
        <authorList>
            <person name="Setubal J.C."/>
            <person name="Dos Santos P."/>
            <person name="Goldman B.S."/>
            <person name="Ertesvaag H."/>
            <person name="Espin G."/>
            <person name="Rubio L.M."/>
            <person name="Valla S."/>
            <person name="Almeida N.F."/>
            <person name="Balasubramanian D."/>
            <person name="Cromes L."/>
            <person name="Curatti L."/>
            <person name="Du Z."/>
            <person name="Godsy E."/>
            <person name="Goodner B."/>
            <person name="Hellner-Burris K."/>
            <person name="Hernandez J.A."/>
            <person name="Houmiel K."/>
            <person name="Imperial J."/>
            <person name="Kennedy C."/>
            <person name="Larson T.J."/>
            <person name="Latreille P."/>
            <person name="Ligon L.S."/>
            <person name="Lu J."/>
            <person name="Maerk M."/>
            <person name="Miller N.M."/>
            <person name="Norton S."/>
            <person name="O'Carroll I.P."/>
            <person name="Paulsen I."/>
            <person name="Raulfs E.C."/>
            <person name="Roemer R."/>
            <person name="Rosser J."/>
            <person name="Segura D."/>
            <person name="Slater S."/>
            <person name="Stricklin S.L."/>
            <person name="Studholme D.J."/>
            <person name="Sun J."/>
            <person name="Viana C.J."/>
            <person name="Wallin E."/>
            <person name="Wang B."/>
            <person name="Wheeler C."/>
            <person name="Zhu H."/>
            <person name="Dean D.R."/>
            <person name="Dixon R."/>
            <person name="Wood D."/>
        </authorList>
    </citation>
    <scope>NUCLEOTIDE SEQUENCE [LARGE SCALE GENOMIC DNA]</scope>
    <source>
        <strain>DJ / ATCC BAA-1303</strain>
    </source>
</reference>
<name>LIGB_AZOVD</name>
<keyword id="KW-0227">DNA damage</keyword>
<keyword id="KW-0234">DNA repair</keyword>
<keyword id="KW-0235">DNA replication</keyword>
<keyword id="KW-0436">Ligase</keyword>
<keyword id="KW-0520">NAD</keyword>
<organism>
    <name type="scientific">Azotobacter vinelandii (strain DJ / ATCC BAA-1303)</name>
    <dbReference type="NCBI Taxonomy" id="322710"/>
    <lineage>
        <taxon>Bacteria</taxon>
        <taxon>Pseudomonadati</taxon>
        <taxon>Pseudomonadota</taxon>
        <taxon>Gammaproteobacteria</taxon>
        <taxon>Pseudomonadales</taxon>
        <taxon>Pseudomonadaceae</taxon>
        <taxon>Azotobacter</taxon>
    </lineage>
</organism>
<protein>
    <recommendedName>
        <fullName evidence="1">DNA ligase B</fullName>
        <ecNumber evidence="1">6.5.1.2</ecNumber>
    </recommendedName>
    <alternativeName>
        <fullName evidence="1">Polydeoxyribonucleotide synthase [NAD(+)] B</fullName>
    </alternativeName>
</protein>
<accession>C1DIC2</accession>
<evidence type="ECO:0000255" key="1">
    <source>
        <dbReference type="HAMAP-Rule" id="MF_01587"/>
    </source>
</evidence>
<sequence length="560" mass="62867">MQRRIAFSLLLLLPFASPALADSACPDWTAQRAAAELAALAERLRQWDVAYHRDGRSPVADELYDQARARLADWNRCFPGQADASPEPLAGSAGPLLHPVPHTGLAKLDEAAVRDWMATREDLWTQPKVDGVAVTLEYADGRLRRAISRGDGRHGQDWTARVRRLPALPRQLAERRRLILQGELYWRLPGHVQAEAGGRSARARVAGLLARDTLDDGDAAGIGLFVWDWPNGPADMRARLDGLERLGFAEARRYSRPVADFATARQWRERWYREPLPFASDGVVLRQGRRPPGERWRAEPPHWAVAWKYPLAQALAEVRAVRFRIGRSGRITPQLELQPVRLDDRQIRRVALGSLRRWRELDVRPGDQVAIRLAGQSIPQVDAVVWRAAERPALPSPDPAAHHALSCWRPLPGCEEQFLARLDWLGGRRGLDLRGVGRGTWEALLENGRLDDLLGWLELDEARLAELPGFGERSASLLAERFRAARRRPFPMWLRALGLPPAGEATLPPSWDELAGRGPEQWQREPGIGPGRARQLQAFFAHPEVQALRQRLRAAGVEGF</sequence>